<dbReference type="EMBL" id="CP000053">
    <property type="protein sequence ID" value="AAY62238.1"/>
    <property type="molecule type" value="Genomic_DNA"/>
</dbReference>
<dbReference type="SMR" id="Q4UJQ1"/>
<dbReference type="STRING" id="315456.RF_1387"/>
<dbReference type="KEGG" id="rfe:RF_1387"/>
<dbReference type="eggNOG" id="COG0323">
    <property type="taxonomic scope" value="Bacteria"/>
</dbReference>
<dbReference type="HOGENOM" id="CLU_004131_4_2_5"/>
<dbReference type="OrthoDB" id="9763467at2"/>
<dbReference type="Proteomes" id="UP000008548">
    <property type="component" value="Chromosome"/>
</dbReference>
<dbReference type="GO" id="GO:0032300">
    <property type="term" value="C:mismatch repair complex"/>
    <property type="evidence" value="ECO:0007669"/>
    <property type="project" value="InterPro"/>
</dbReference>
<dbReference type="GO" id="GO:0005524">
    <property type="term" value="F:ATP binding"/>
    <property type="evidence" value="ECO:0007669"/>
    <property type="project" value="InterPro"/>
</dbReference>
<dbReference type="GO" id="GO:0016887">
    <property type="term" value="F:ATP hydrolysis activity"/>
    <property type="evidence" value="ECO:0007669"/>
    <property type="project" value="InterPro"/>
</dbReference>
<dbReference type="GO" id="GO:0140664">
    <property type="term" value="F:ATP-dependent DNA damage sensor activity"/>
    <property type="evidence" value="ECO:0007669"/>
    <property type="project" value="InterPro"/>
</dbReference>
<dbReference type="GO" id="GO:0030983">
    <property type="term" value="F:mismatched DNA binding"/>
    <property type="evidence" value="ECO:0007669"/>
    <property type="project" value="InterPro"/>
</dbReference>
<dbReference type="GO" id="GO:0006298">
    <property type="term" value="P:mismatch repair"/>
    <property type="evidence" value="ECO:0007669"/>
    <property type="project" value="UniProtKB-UniRule"/>
</dbReference>
<dbReference type="CDD" id="cd16926">
    <property type="entry name" value="HATPase_MutL-MLH-PMS-like"/>
    <property type="match status" value="1"/>
</dbReference>
<dbReference type="CDD" id="cd00782">
    <property type="entry name" value="MutL_Trans"/>
    <property type="match status" value="1"/>
</dbReference>
<dbReference type="FunFam" id="3.30.565.10:FF:000003">
    <property type="entry name" value="DNA mismatch repair endonuclease MutL"/>
    <property type="match status" value="1"/>
</dbReference>
<dbReference type="Gene3D" id="3.30.230.10">
    <property type="match status" value="1"/>
</dbReference>
<dbReference type="Gene3D" id="3.30.565.10">
    <property type="entry name" value="Histidine kinase-like ATPase, C-terminal domain"/>
    <property type="match status" value="1"/>
</dbReference>
<dbReference type="Gene3D" id="3.30.1540.20">
    <property type="entry name" value="MutL, C-terminal domain, dimerisation subdomain"/>
    <property type="match status" value="1"/>
</dbReference>
<dbReference type="Gene3D" id="3.30.1370.100">
    <property type="entry name" value="MutL, C-terminal domain, regulatory subdomain"/>
    <property type="match status" value="1"/>
</dbReference>
<dbReference type="HAMAP" id="MF_00149">
    <property type="entry name" value="DNA_mis_repair"/>
    <property type="match status" value="1"/>
</dbReference>
<dbReference type="InterPro" id="IPR014762">
    <property type="entry name" value="DNA_mismatch_repair_CS"/>
</dbReference>
<dbReference type="InterPro" id="IPR020667">
    <property type="entry name" value="DNA_mismatch_repair_MutL"/>
</dbReference>
<dbReference type="InterPro" id="IPR013507">
    <property type="entry name" value="DNA_mismatch_S5_2-like"/>
</dbReference>
<dbReference type="InterPro" id="IPR036890">
    <property type="entry name" value="HATPase_C_sf"/>
</dbReference>
<dbReference type="InterPro" id="IPR002099">
    <property type="entry name" value="MutL/Mlh/PMS"/>
</dbReference>
<dbReference type="InterPro" id="IPR038973">
    <property type="entry name" value="MutL/Mlh/Pms-like"/>
</dbReference>
<dbReference type="InterPro" id="IPR014790">
    <property type="entry name" value="MutL_C"/>
</dbReference>
<dbReference type="InterPro" id="IPR042120">
    <property type="entry name" value="MutL_C_dimsub"/>
</dbReference>
<dbReference type="InterPro" id="IPR042121">
    <property type="entry name" value="MutL_C_regsub"/>
</dbReference>
<dbReference type="InterPro" id="IPR037198">
    <property type="entry name" value="MutL_C_sf"/>
</dbReference>
<dbReference type="InterPro" id="IPR020568">
    <property type="entry name" value="Ribosomal_Su5_D2-typ_SF"/>
</dbReference>
<dbReference type="InterPro" id="IPR014721">
    <property type="entry name" value="Ribsml_uS5_D2-typ_fold_subgr"/>
</dbReference>
<dbReference type="NCBIfam" id="TIGR00585">
    <property type="entry name" value="mutl"/>
    <property type="match status" value="1"/>
</dbReference>
<dbReference type="NCBIfam" id="NF000952">
    <property type="entry name" value="PRK00095.2-2"/>
    <property type="match status" value="1"/>
</dbReference>
<dbReference type="NCBIfam" id="NF000953">
    <property type="entry name" value="PRK00095.2-4"/>
    <property type="match status" value="1"/>
</dbReference>
<dbReference type="PANTHER" id="PTHR10073">
    <property type="entry name" value="DNA MISMATCH REPAIR PROTEIN MLH, PMS, MUTL"/>
    <property type="match status" value="1"/>
</dbReference>
<dbReference type="PANTHER" id="PTHR10073:SF12">
    <property type="entry name" value="DNA MISMATCH REPAIR PROTEIN MLH1"/>
    <property type="match status" value="1"/>
</dbReference>
<dbReference type="Pfam" id="PF01119">
    <property type="entry name" value="DNA_mis_repair"/>
    <property type="match status" value="1"/>
</dbReference>
<dbReference type="Pfam" id="PF13589">
    <property type="entry name" value="HATPase_c_3"/>
    <property type="match status" value="1"/>
</dbReference>
<dbReference type="Pfam" id="PF08676">
    <property type="entry name" value="MutL_C"/>
    <property type="match status" value="1"/>
</dbReference>
<dbReference type="SMART" id="SM01340">
    <property type="entry name" value="DNA_mis_repair"/>
    <property type="match status" value="1"/>
</dbReference>
<dbReference type="SMART" id="SM00853">
    <property type="entry name" value="MutL_C"/>
    <property type="match status" value="1"/>
</dbReference>
<dbReference type="SUPFAM" id="SSF55874">
    <property type="entry name" value="ATPase domain of HSP90 chaperone/DNA topoisomerase II/histidine kinase"/>
    <property type="match status" value="1"/>
</dbReference>
<dbReference type="SUPFAM" id="SSF118116">
    <property type="entry name" value="DNA mismatch repair protein MutL"/>
    <property type="match status" value="1"/>
</dbReference>
<dbReference type="SUPFAM" id="SSF54211">
    <property type="entry name" value="Ribosomal protein S5 domain 2-like"/>
    <property type="match status" value="1"/>
</dbReference>
<dbReference type="PROSITE" id="PS00058">
    <property type="entry name" value="DNA_MISMATCH_REPAIR_1"/>
    <property type="match status" value="1"/>
</dbReference>
<comment type="function">
    <text evidence="1">This protein is involved in the repair of mismatches in DNA. It is required for dam-dependent methyl-directed DNA mismatch repair. May act as a 'molecular matchmaker', a protein that promotes the formation of a stable complex between two or more DNA-binding proteins in an ATP-dependent manner without itself being part of a final effector complex.</text>
</comment>
<comment type="similarity">
    <text evidence="1">Belongs to the DNA mismatch repair MutL/HexB family.</text>
</comment>
<sequence length="609" mass="68766">MTIKFLSESTINRIAAGEVIERPASVVKELVENAVDAGSTKIDIILERAGKNLIIISDDGIGMTDKELEIAVERHTTSKLDESDFLNIHTFGFRGEALPSIAAISKMLITSKKQGADKAFQIKLIGGNEKQVTVSVHNEGTKIEIRDLFFATPARLKFLRADKTELAATVDVVKKIALAHPEISFSLTHDDRNLLKFKGQNKDAETNLKQRIIDVIGDDFIKNAAYIDFKTPDFSICGYTSIPTYNRASSEDQFLFINNRPVKDKLLQVALRVAYQDYLARDRYPLCAIFLQIDPQLVDVNVHPAKAEVRFHDPNYVRNLLIEAIKNALTNKSHVTSTTIASDALQLFKNPLVNKQPSVSKAVSVNSKPADYRPAMSPSFKPTPNTACQKLIDTLPHAKIEQEVERRIEHEQQVHKQYKLGAAKAQLHTTYIISQTEDSIVITDQHAAHERLGYEKIKDYLKTEELIKQRLLIPEIVELPNERKADCLYENREKLYKLGLTLEKFGEKSIIVTEIPNILEDVNVQKLIQDLADHLSDFGENIALTELIEHVTETYACHYSIRAGRKLSADEMNALLRQMENTPFSGQCNHGRPTYIELKLKDIERLFGR</sequence>
<feature type="chain" id="PRO_0000274890" description="DNA mismatch repair protein MutL">
    <location>
        <begin position="1"/>
        <end position="609"/>
    </location>
</feature>
<accession>Q4UJQ1</accession>
<organism>
    <name type="scientific">Rickettsia felis (strain ATCC VR-1525 / URRWXCal2)</name>
    <name type="common">Rickettsia azadi</name>
    <dbReference type="NCBI Taxonomy" id="315456"/>
    <lineage>
        <taxon>Bacteria</taxon>
        <taxon>Pseudomonadati</taxon>
        <taxon>Pseudomonadota</taxon>
        <taxon>Alphaproteobacteria</taxon>
        <taxon>Rickettsiales</taxon>
        <taxon>Rickettsiaceae</taxon>
        <taxon>Rickettsieae</taxon>
        <taxon>Rickettsia</taxon>
        <taxon>spotted fever group</taxon>
    </lineage>
</organism>
<reference key="1">
    <citation type="journal article" date="2005" name="PLoS Biol.">
        <title>The genome sequence of Rickettsia felis identifies the first putative conjugative plasmid in an obligate intracellular parasite.</title>
        <authorList>
            <person name="Ogata H."/>
            <person name="Renesto P."/>
            <person name="Audic S."/>
            <person name="Robert C."/>
            <person name="Blanc G."/>
            <person name="Fournier P.-E."/>
            <person name="Parinello H."/>
            <person name="Claverie J.-M."/>
            <person name="Raoult D."/>
        </authorList>
    </citation>
    <scope>NUCLEOTIDE SEQUENCE [LARGE SCALE GENOMIC DNA]</scope>
    <source>
        <strain>ATCC VR-1525 / URRWXCal2</strain>
    </source>
</reference>
<evidence type="ECO:0000255" key="1">
    <source>
        <dbReference type="HAMAP-Rule" id="MF_00149"/>
    </source>
</evidence>
<name>MUTL_RICFE</name>
<keyword id="KW-0227">DNA damage</keyword>
<keyword id="KW-0234">DNA repair</keyword>
<gene>
    <name evidence="1" type="primary">mutL</name>
    <name type="ordered locus">RF_1387</name>
</gene>
<proteinExistence type="inferred from homology"/>
<protein>
    <recommendedName>
        <fullName evidence="1">DNA mismatch repair protein MutL</fullName>
    </recommendedName>
</protein>